<gene>
    <name type="ordered locus">NWMN_1737</name>
</gene>
<sequence length="114" mass="13310">MAVNLYDYANQLEQALRESEEYKAIKEAFANVKANEESKKLFDEFRETQINFQQKQMQGEEIAEEDLQKAQEQAQAIEKDENISALMNAEQKMSQVFQEINQIIVKPLDEIYAD</sequence>
<name>Y1737_STAAE</name>
<dbReference type="EMBL" id="AP009351">
    <property type="protein sequence ID" value="BAF68009.1"/>
    <property type="molecule type" value="Genomic_DNA"/>
</dbReference>
<dbReference type="RefSeq" id="WP_000290301.1">
    <property type="nucleotide sequence ID" value="NZ_JBBIAE010000013.1"/>
</dbReference>
<dbReference type="SMR" id="A6QI27"/>
<dbReference type="KEGG" id="sae:NWMN_1737"/>
<dbReference type="HOGENOM" id="CLU_140243_3_0_9"/>
<dbReference type="Proteomes" id="UP000006386">
    <property type="component" value="Chromosome"/>
</dbReference>
<dbReference type="Gene3D" id="1.20.1500.10">
    <property type="entry name" value="YheA/YmcA-like"/>
    <property type="match status" value="1"/>
</dbReference>
<dbReference type="HAMAP" id="MF_01526">
    <property type="entry name" value="UPF0342"/>
    <property type="match status" value="1"/>
</dbReference>
<dbReference type="InterPro" id="IPR010368">
    <property type="entry name" value="Com_YlbF"/>
</dbReference>
<dbReference type="InterPro" id="IPR023378">
    <property type="entry name" value="YheA/YmcA-like_dom_sf"/>
</dbReference>
<dbReference type="NCBIfam" id="NF010212">
    <property type="entry name" value="PRK13676.1-5"/>
    <property type="match status" value="1"/>
</dbReference>
<dbReference type="Pfam" id="PF06133">
    <property type="entry name" value="Com_YlbF"/>
    <property type="match status" value="1"/>
</dbReference>
<dbReference type="SUPFAM" id="SSF158622">
    <property type="entry name" value="YheA/YmcA-like"/>
    <property type="match status" value="1"/>
</dbReference>
<evidence type="ECO:0000255" key="1">
    <source>
        <dbReference type="HAMAP-Rule" id="MF_01526"/>
    </source>
</evidence>
<protein>
    <recommendedName>
        <fullName evidence="1">UPF0342 protein NWMN_1737</fullName>
    </recommendedName>
</protein>
<reference key="1">
    <citation type="journal article" date="2008" name="J. Bacteriol.">
        <title>Genome sequence of Staphylococcus aureus strain Newman and comparative analysis of staphylococcal genomes: polymorphism and evolution of two major pathogenicity islands.</title>
        <authorList>
            <person name="Baba T."/>
            <person name="Bae T."/>
            <person name="Schneewind O."/>
            <person name="Takeuchi F."/>
            <person name="Hiramatsu K."/>
        </authorList>
    </citation>
    <scope>NUCLEOTIDE SEQUENCE [LARGE SCALE GENOMIC DNA]</scope>
    <source>
        <strain>Newman</strain>
    </source>
</reference>
<proteinExistence type="inferred from homology"/>
<comment type="similarity">
    <text evidence="1">Belongs to the UPF0342 family.</text>
</comment>
<feature type="chain" id="PRO_1000073545" description="UPF0342 protein NWMN_1737">
    <location>
        <begin position="1"/>
        <end position="114"/>
    </location>
</feature>
<accession>A6QI27</accession>
<organism>
    <name type="scientific">Staphylococcus aureus (strain Newman)</name>
    <dbReference type="NCBI Taxonomy" id="426430"/>
    <lineage>
        <taxon>Bacteria</taxon>
        <taxon>Bacillati</taxon>
        <taxon>Bacillota</taxon>
        <taxon>Bacilli</taxon>
        <taxon>Bacillales</taxon>
        <taxon>Staphylococcaceae</taxon>
        <taxon>Staphylococcus</taxon>
    </lineage>
</organism>